<comment type="function">
    <text evidence="1">Modifies the subcellular distribution of heterogeneous nuclear ribonucleoprotein K (HNRNPK) and may contribute to modulate HNRNPK functions related to processing and export of mRNAs during ASFV infection (By similarity). Necessary for virus internalization (By similarity).</text>
</comment>
<comment type="subunit">
    <text evidence="1">Oligomer. Interacts with host HNRNPK.</text>
</comment>
<comment type="subcellular location">
    <subcellularLocation>
        <location evidence="1">Host cytoplasm</location>
    </subcellularLocation>
    <subcellularLocation>
        <location evidence="1">Host nucleus</location>
    </subcellularLocation>
    <subcellularLocation>
        <location evidence="1">Virion</location>
    </subcellularLocation>
</comment>
<comment type="induction">
    <text evidence="2">Expressed in the early phase of the viral replicative cycle.</text>
</comment>
<comment type="similarity">
    <text evidence="2">Belongs to the asfivirus phosphoprotein p30 family.</text>
</comment>
<organismHost>
    <name type="scientific">Ornithodoros</name>
    <name type="common">relapsing fever ticks</name>
    <dbReference type="NCBI Taxonomy" id="6937"/>
</organismHost>
<organismHost>
    <name type="scientific">Phacochoerus aethiopicus</name>
    <name type="common">Warthog</name>
    <dbReference type="NCBI Taxonomy" id="85517"/>
</organismHost>
<organismHost>
    <name type="scientific">Phacochoerus africanus</name>
    <name type="common">Warthog</name>
    <dbReference type="NCBI Taxonomy" id="41426"/>
</organismHost>
<organismHost>
    <name type="scientific">Potamochoerus larvatus</name>
    <name type="common">Bushpig</name>
    <dbReference type="NCBI Taxonomy" id="273792"/>
</organismHost>
<organismHost>
    <name type="scientific">Sus scrofa</name>
    <name type="common">Pig</name>
    <dbReference type="NCBI Taxonomy" id="9823"/>
</organismHost>
<accession>P0C9Z4</accession>
<keyword id="KW-0244">Early protein</keyword>
<keyword id="KW-1035">Host cytoplasm</keyword>
<keyword id="KW-1048">Host nucleus</keyword>
<keyword id="KW-0945">Host-virus interaction</keyword>
<keyword id="KW-0597">Phosphoprotein</keyword>
<keyword id="KW-0946">Virion</keyword>
<name>P30_ASFWA</name>
<dbReference type="EMBL" id="AY261366">
    <property type="status" value="NOT_ANNOTATED_CDS"/>
    <property type="molecule type" value="Genomic_DNA"/>
</dbReference>
<dbReference type="SMR" id="P0C9Z4"/>
<dbReference type="Proteomes" id="UP000000858">
    <property type="component" value="Segment"/>
</dbReference>
<dbReference type="GO" id="GO:0030430">
    <property type="term" value="C:host cell cytoplasm"/>
    <property type="evidence" value="ECO:0007669"/>
    <property type="project" value="UniProtKB-SubCell"/>
</dbReference>
<dbReference type="GO" id="GO:0042025">
    <property type="term" value="C:host cell nucleus"/>
    <property type="evidence" value="ECO:0007669"/>
    <property type="project" value="UniProtKB-SubCell"/>
</dbReference>
<dbReference type="GO" id="GO:0044423">
    <property type="term" value="C:virion component"/>
    <property type="evidence" value="ECO:0007669"/>
    <property type="project" value="UniProtKB-KW"/>
</dbReference>
<protein>
    <recommendedName>
        <fullName>Phosphoprotein p30</fullName>
        <shortName>p30</shortName>
    </recommendedName>
    <alternativeName>
        <fullName>Phosphoprotein p32</fullName>
        <shortName>p32</shortName>
    </alternativeName>
</protein>
<proteinExistence type="inferred from homology"/>
<sequence length="186" mass="21413">MKMEVIFKTDLRSSSQVVFHAGSLYNWFSVEIINSGRIVTTAIKTLLSTVKYDIVKSARIYAGQGYTEHQAQEEWNMILHVLFEEETESSASSESIHEKNDNETNECTSSFETLFEQEPPSEVPKDSKLYMLAQKTVQHIEQYGKAPDFNKVIRAHNFIQTIHGTPLKEEEKEVVRIMVIKLLKKK</sequence>
<organism>
    <name type="scientific">African swine fever virus (isolate Warthog/Namibia/Wart80/1980)</name>
    <name type="common">ASFV</name>
    <dbReference type="NCBI Taxonomy" id="561444"/>
    <lineage>
        <taxon>Viruses</taxon>
        <taxon>Varidnaviria</taxon>
        <taxon>Bamfordvirae</taxon>
        <taxon>Nucleocytoviricota</taxon>
        <taxon>Pokkesviricetes</taxon>
        <taxon>Asfuvirales</taxon>
        <taxon>Asfarviridae</taxon>
        <taxon>Asfivirus</taxon>
        <taxon>African swine fever virus</taxon>
    </lineage>
</organism>
<gene>
    <name type="ordered locus">War-103</name>
</gene>
<feature type="chain" id="PRO_0000373409" description="Phosphoprotein p30">
    <location>
        <begin position="1"/>
        <end position="186"/>
    </location>
</feature>
<reference key="1">
    <citation type="submission" date="2003-03" db="EMBL/GenBank/DDBJ databases">
        <title>African swine fever virus genomes.</title>
        <authorList>
            <person name="Kutish G.F."/>
            <person name="Rock D.L."/>
        </authorList>
    </citation>
    <scope>NUCLEOTIDE SEQUENCE [LARGE SCALE GENOMIC DNA]</scope>
</reference>
<evidence type="ECO:0000250" key="1">
    <source>
        <dbReference type="UniProtKB" id="P34204"/>
    </source>
</evidence>
<evidence type="ECO:0000305" key="2"/>